<proteinExistence type="evidence at protein level"/>
<name>KAX61_PANIM</name>
<organism>
    <name type="scientific">Pandinus imperator</name>
    <name type="common">Emperor scorpion</name>
    <dbReference type="NCBI Taxonomy" id="55084"/>
    <lineage>
        <taxon>Eukaryota</taxon>
        <taxon>Metazoa</taxon>
        <taxon>Ecdysozoa</taxon>
        <taxon>Arthropoda</taxon>
        <taxon>Chelicerata</taxon>
        <taxon>Arachnida</taxon>
        <taxon>Scorpiones</taxon>
        <taxon>Iurida</taxon>
        <taxon>Scorpionoidea</taxon>
        <taxon>Scorpionidae</taxon>
        <taxon>Pandininae</taxon>
        <taxon>Pandinus</taxon>
    </lineage>
</organism>
<accession>Q10726</accession>
<comment type="function">
    <text evidence="1 2 5 7 9">Potently and reversibly inhibits the insect voltage-gated Shaker (Sh) potassium channel (isoform alpha (B)), the mammalian voltage-gated potassium channels Kv1.2/KCNA2 (IC(50)=0.44 nM), and the calcium-activated potassium channel KCa2.3/KCNN3 (Kd=330 nM) (PubMed:10931199, PubMed:11527975, PubMed:9001397). Its effect on Kv1.3/KCNA3 is controversial, since this channel is voltage-independently inhibited in PubMed:9464266, but is not affected in PubMed:10931199. Furthermore, this toxin competes with apamin (a small conductance calcium-activated potassium channel inhibitor) for binding to rat brain synaptosomes.</text>
</comment>
<comment type="subcellular location">
    <subcellularLocation>
        <location evidence="5 6">Secreted</location>
    </subcellularLocation>
</comment>
<comment type="tissue specificity">
    <text evidence="15 16">Expressed by the venom gland.</text>
</comment>
<comment type="domain">
    <text evidence="4">Has the structural arrangement of an alpha-helix connected to a beta-sheet by disulfide bonds (CSalpha/beta).</text>
</comment>
<comment type="domain">
    <text>The alpha-helical domain may play a key role in the recognition of SK channels.</text>
</comment>
<comment type="domain">
    <text>The beta-sheet structure may be involved in bioactivity on Kv channels.</text>
</comment>
<comment type="toxic dose">
    <text evidence="1">LD(50) is 10 ug/kg by intraperitoneal injection into mice.</text>
</comment>
<comment type="miscellaneous">
    <text>Pi1 analog that is synthesized with a phosphorylation at Tyr-33 (P-Pi1) suffers a 200-fold decrease in LD(50), a 200-fold decrease of potency in competition assay with apamin, and a 58-fold decrease in inhibiting Kv1.2/KCNA2 channels.</text>
</comment>
<comment type="miscellaneous">
    <text evidence="1 6">Negative results: does not or very weakly inhibits KCa2.2/KCNN2 (Kd&gt; 1 uM) and Kv1.1/KCNA1 (no effect observed at 5 uM).</text>
</comment>
<comment type="similarity">
    <text evidence="13">Belongs to the short scorpion toxin superfamily. Potassium channel inhibitor family. Alpha-KTx 06 subfamily.</text>
</comment>
<keyword id="KW-0002">3D-structure</keyword>
<keyword id="KW-1221">Calcium-activated potassium channel impairing toxin</keyword>
<keyword id="KW-0903">Direct protein sequencing</keyword>
<keyword id="KW-1015">Disulfide bond</keyword>
<keyword id="KW-0872">Ion channel impairing toxin</keyword>
<keyword id="KW-0528">Neurotoxin</keyword>
<keyword id="KW-0632">Potassium channel impairing toxin</keyword>
<keyword id="KW-0964">Secreted</keyword>
<keyword id="KW-0800">Toxin</keyword>
<keyword id="KW-1220">Voltage-gated potassium channel impairing toxin</keyword>
<dbReference type="PIR" id="S69599">
    <property type="entry name" value="S69599"/>
</dbReference>
<dbReference type="PDB" id="1WZ5">
    <property type="method" value="NMR"/>
    <property type="chains" value="A=1-35"/>
</dbReference>
<dbReference type="PDBsum" id="1WZ5"/>
<dbReference type="SMR" id="Q10726"/>
<dbReference type="EvolutionaryTrace" id="Q10726"/>
<dbReference type="GO" id="GO:0005576">
    <property type="term" value="C:extracellular region"/>
    <property type="evidence" value="ECO:0007669"/>
    <property type="project" value="UniProtKB-SubCell"/>
</dbReference>
<dbReference type="GO" id="GO:0008200">
    <property type="term" value="F:ion channel inhibitor activity"/>
    <property type="evidence" value="ECO:0007669"/>
    <property type="project" value="InterPro"/>
</dbReference>
<dbReference type="GO" id="GO:0015459">
    <property type="term" value="F:potassium channel regulator activity"/>
    <property type="evidence" value="ECO:0007669"/>
    <property type="project" value="UniProtKB-KW"/>
</dbReference>
<dbReference type="GO" id="GO:0090729">
    <property type="term" value="F:toxin activity"/>
    <property type="evidence" value="ECO:0007669"/>
    <property type="project" value="UniProtKB-KW"/>
</dbReference>
<dbReference type="Gene3D" id="3.30.30.10">
    <property type="entry name" value="Knottin, scorpion toxin-like"/>
    <property type="match status" value="1"/>
</dbReference>
<dbReference type="InterPro" id="IPR036574">
    <property type="entry name" value="Scorpion_toxin-like_sf"/>
</dbReference>
<dbReference type="InterPro" id="IPR001947">
    <property type="entry name" value="Scorpion_toxinS_K_inh"/>
</dbReference>
<dbReference type="Pfam" id="PF00451">
    <property type="entry name" value="Toxin_2"/>
    <property type="match status" value="1"/>
</dbReference>
<dbReference type="SUPFAM" id="SSF57095">
    <property type="entry name" value="Scorpion toxin-like"/>
    <property type="match status" value="1"/>
</dbReference>
<dbReference type="PROSITE" id="PS01138">
    <property type="entry name" value="SCORP_SHORT_TOXIN"/>
    <property type="match status" value="1"/>
</dbReference>
<protein>
    <recommendedName>
        <fullName>Potassium channel toxin alpha-KTx 6.1</fullName>
    </recommendedName>
    <alternativeName>
        <fullName evidence="11">PiTX-K-gamma</fullName>
    </alternativeName>
    <alternativeName>
        <fullName>Potassium channel-blocking toxin 1</fullName>
        <shortName>Pi-1</shortName>
        <shortName evidence="10 12">Pi1</shortName>
    </alternativeName>
</protein>
<sequence length="35" mass="3843">LVKCRGTSDCGRPCQQQTGCPNSKCINRMCKCYGC</sequence>
<reference key="1">
    <citation type="journal article" date="1996" name="Biochem. J.">
        <title>A novel structural class of K+-channel blocking toxin from the scorpion Pandinus imperator.</title>
        <authorList>
            <person name="Olamendi-Portugal T."/>
            <person name="Gomez-Lagunas F."/>
            <person name="Gurrola G.B."/>
            <person name="Possani L.D."/>
        </authorList>
    </citation>
    <scope>PROTEIN SEQUENCE</scope>
    <scope>FUNCTION</scope>
    <scope>DISULFIDE BONDS</scope>
    <scope>SUBCELLULAR LOCATION</scope>
    <source>
        <tissue>Venom</tissue>
    </source>
</reference>
<reference key="2">
    <citation type="journal article" date="1996" name="Mol. Pharmacol.">
        <title>Three new toxins from the scorpion Pandinus imperator selectively block certain voltage-gated K+ channels.</title>
        <authorList>
            <person name="Rogowski R.S."/>
            <person name="Collins J.H."/>
            <person name="O'Neill T.J."/>
            <person name="Gustafson T.A."/>
            <person name="Werkman T.R."/>
            <person name="Rogawski M.A."/>
            <person name="Tenenholz T.C."/>
            <person name="Weber D.J."/>
            <person name="Blaustein M.P."/>
        </authorList>
    </citation>
    <scope>PROTEIN SEQUENCE</scope>
    <scope>FUNCTION</scope>
    <scope>SUBCELLULAR LOCATION</scope>
    <source>
        <tissue>Venom</tissue>
    </source>
</reference>
<reference key="3">
    <citation type="journal article" date="1997" name="FEBS Lett.">
        <title>Block of ShakerB K+ channels by Pi1, a novel class of scorpion toxin.</title>
        <authorList>
            <person name="Gomez-Lagunas F."/>
            <person name="Olamendi-Portugal T."/>
            <person name="Possani L.D."/>
        </authorList>
    </citation>
    <scope>FUNCTION</scope>
</reference>
<reference key="4">
    <citation type="journal article" date="1998" name="Biochem. Biophys. Res. Commun.">
        <title>Pandinus imperator scorpion venom blocks voltage-gated K+ channels in human lymphocytes.</title>
        <authorList>
            <person name="Peter M. Jr."/>
            <person name="Varga Z."/>
            <person name="Panyi G."/>
            <person name="Bene L."/>
            <person name="Damjanovich S."/>
            <person name="Pieri C."/>
            <person name="Possani L.D."/>
            <person name="Gaspar R. Jr."/>
        </authorList>
    </citation>
    <scope>FUNCTION</scope>
</reference>
<reference key="5">
    <citation type="journal article" date="2000" name="Eur. J. Biochem.">
        <title>Chemical synthesis and characterization of Pi1, a scorpion toxin from Pandinus imperator active on K+ channels.</title>
        <authorList>
            <person name="Fajloun Z."/>
            <person name="Carlier E."/>
            <person name="Lecomte C."/>
            <person name="Geib S."/>
            <person name="Di Luccio E."/>
            <person name="Bichet D."/>
            <person name="Mabrouk K."/>
            <person name="Rochat H."/>
            <person name="De Waard M."/>
            <person name="Sabatier J.M."/>
        </authorList>
    </citation>
    <scope>FUNCTION</scope>
    <scope>TOXIC DOSE</scope>
    <scope>SYNTHESIS</scope>
</reference>
<reference key="6">
    <citation type="journal article" date="2001" name="J. Biol. Chem.">
        <title>Design and characterization of a highly selective peptide inhibitor of the small conductance calcium-activated K+ channel, SkCa2.</title>
        <authorList>
            <person name="Shakkottai V.G."/>
            <person name="Regaya I."/>
            <person name="Wulff H."/>
            <person name="Fajloun Z."/>
            <person name="Tomita H."/>
            <person name="Fathallah M."/>
            <person name="Cahalan M.D."/>
            <person name="Gargus J.J."/>
            <person name="Sabatier J.M."/>
            <person name="Chandy K.G."/>
        </authorList>
    </citation>
    <scope>FUNCTION</scope>
</reference>
<reference key="7">
    <citation type="journal article" date="2004" name="Biochem. J.">
        <title>The 'functional' dyad of scorpion toxin Pi1 is not itself a prerequisite for toxin binding to the voltage-gated Kv1.2 potassium channels.</title>
        <authorList>
            <person name="Mouhat S."/>
            <person name="Mosbah A."/>
            <person name="Visan V."/>
            <person name="Wulff H."/>
            <person name="Delepierre M."/>
            <person name="Darbon H."/>
            <person name="Grissmer S."/>
            <person name="De Waard M."/>
            <person name="Sabatier J.M."/>
        </authorList>
    </citation>
    <scope>MUTAGENESIS OF ARG-5; ARG-12; LYS-24; LYS-31 AND TYR-33</scope>
    <scope>SITES</scope>
</reference>
<reference key="8">
    <citation type="journal article" date="1997" name="Biochemistry">
        <title>A novel potassium channel blocking toxin from the scorpion Pandinus imperator: a 1H NMR analysis using a nano-NMR probe.</title>
        <authorList>
            <person name="Delepierre M."/>
            <person name="Prochnicka-Chalufour A."/>
            <person name="Possani L.D."/>
        </authorList>
    </citation>
    <scope>STRUCTURE BY NMR</scope>
    <scope>DISULFIDE BONDS</scope>
</reference>
<reference key="9">
    <citation type="journal article" date="2005" name="Proteins">
        <title>The impact of the fourth disulfide bridge in scorpion toxins of the alpha-KTx6 subfamily.</title>
        <authorList>
            <person name="Carrega L."/>
            <person name="Mosbah A."/>
            <person name="Ferrat G."/>
            <person name="Beeton C."/>
            <person name="Andreotti N."/>
            <person name="Mansuelle P."/>
            <person name="Darbon H."/>
            <person name="De Waard M."/>
            <person name="Sabatier J.M."/>
        </authorList>
    </citation>
    <scope>STRUCTURE BY NMR</scope>
    <scope>DISULFIDE BONDS</scope>
</reference>
<feature type="peptide" id="PRO_0000044912" description="Potassium channel toxin alpha-KTx 6.1" evidence="5 6">
    <location>
        <begin position="1"/>
        <end position="35"/>
    </location>
</feature>
<feature type="site" description="Part of the basic ring which may anchor to the external vestibule of the K(+) channel" evidence="3">
    <location>
        <position position="5"/>
    </location>
</feature>
<feature type="site" description="Part of the basic ring which may anchor to the external vestibule of the K(+) channel" evidence="3">
    <location>
        <position position="12"/>
    </location>
</feature>
<feature type="site" description="Basic residue of the functional dyad" evidence="3">
    <location>
        <position position="24"/>
    </location>
</feature>
<feature type="site" description="Part of the basic ring which may anchor to the external vestibule of the K(+) channel" evidence="14">
    <location>
        <position position="28"/>
    </location>
</feature>
<feature type="site" description="Part of the basic ring which may anchor to the external vestibule of the K(+) channel" evidence="3">
    <location>
        <position position="31"/>
    </location>
</feature>
<feature type="site" description="Aromatic residue of the functional dyad" evidence="3">
    <location>
        <position position="33"/>
    </location>
</feature>
<feature type="disulfide bond" evidence="4 5 8 17">
    <location>
        <begin position="4"/>
        <end position="25"/>
    </location>
</feature>
<feature type="disulfide bond" evidence="4 5 8 17">
    <location>
        <begin position="10"/>
        <end position="30"/>
    </location>
</feature>
<feature type="disulfide bond" evidence="4 5 8 17">
    <location>
        <begin position="14"/>
        <end position="32"/>
    </location>
</feature>
<feature type="disulfide bond" evidence="4 5 8 17">
    <location>
        <begin position="20"/>
        <end position="35"/>
    </location>
</feature>
<feature type="mutagenesis site" description="51-fold decrease in inhibiting Kv1.2/KCNA2 channels; when associated with A-12. 479-fold decrease in inhibiting Kv1.2/KCNA2 channels; when associated with A-31." evidence="3">
    <original>R</original>
    <variation>A</variation>
    <location>
        <position position="5"/>
    </location>
</feature>
<feature type="mutagenesis site" description="51-fold decrease in inhibiting Kv1.2/KCNA2 channels; when associated with A-5." evidence="3">
    <original>R</original>
    <variation>A</variation>
    <location>
        <position position="12"/>
    </location>
</feature>
<feature type="mutagenesis site" description="500-fold decrease in LD(50), 600-fold decrease of potency in competition assay with apamin, and 17000-fold decrease in inhibiting Kv1.2/KCNA2 channels; when associated with A-33." evidence="3">
    <original>K</original>
    <variation>A</variation>
    <location>
        <position position="24"/>
    </location>
</feature>
<feature type="mutagenesis site" description="294-fold decrease in inhibiting Kv1.2/KCNA2 channels. 479-fold decrease in inhibiting Kv1.2/KCNA2 channels; when associated with A-5." evidence="3">
    <original>K</original>
    <variation>A</variation>
    <location>
        <position position="31"/>
    </location>
</feature>
<feature type="mutagenesis site" description="500-fold decrease in LD(50), 600-fold decrease of potency in competition assay with apamin, and 17,000-fold decrease in inhibiting Kv1.2/KCNA2 channels; when associated with A-24." evidence="3">
    <original>Y</original>
    <variation>A</variation>
    <location>
        <position position="33"/>
    </location>
</feature>
<feature type="turn" evidence="18">
    <location>
        <begin position="6"/>
        <end position="10"/>
    </location>
</feature>
<feature type="helix" evidence="18">
    <location>
        <begin position="11"/>
        <end position="17"/>
    </location>
</feature>
<feature type="strand" evidence="18">
    <location>
        <begin position="24"/>
        <end position="26"/>
    </location>
</feature>
<feature type="strand" evidence="18">
    <location>
        <begin position="29"/>
        <end position="31"/>
    </location>
</feature>
<evidence type="ECO:0000269" key="1">
    <source>
    </source>
</evidence>
<evidence type="ECO:0000269" key="2">
    <source>
    </source>
</evidence>
<evidence type="ECO:0000269" key="3">
    <source>
    </source>
</evidence>
<evidence type="ECO:0000269" key="4">
    <source>
    </source>
</evidence>
<evidence type="ECO:0000269" key="5">
    <source>
    </source>
</evidence>
<evidence type="ECO:0000269" key="6">
    <source>
    </source>
</evidence>
<evidence type="ECO:0000269" key="7">
    <source>
    </source>
</evidence>
<evidence type="ECO:0000269" key="8">
    <source>
    </source>
</evidence>
<evidence type="ECO:0000269" key="9">
    <source>
    </source>
</evidence>
<evidence type="ECO:0000303" key="10">
    <source>
    </source>
</evidence>
<evidence type="ECO:0000303" key="11">
    <source>
    </source>
</evidence>
<evidence type="ECO:0000303" key="12">
    <source>
    </source>
</evidence>
<evidence type="ECO:0000305" key="13"/>
<evidence type="ECO:0000305" key="14">
    <source>
    </source>
</evidence>
<evidence type="ECO:0000305" key="15">
    <source>
    </source>
</evidence>
<evidence type="ECO:0000305" key="16">
    <source>
    </source>
</evidence>
<evidence type="ECO:0000312" key="17">
    <source>
        <dbReference type="PDB" id="1WZ5"/>
    </source>
</evidence>
<evidence type="ECO:0007829" key="18">
    <source>
        <dbReference type="PDB" id="1WZ5"/>
    </source>
</evidence>